<organism>
    <name type="scientific">Methanocaldococcus jannaschii (strain ATCC 43067 / DSM 2661 / JAL-1 / JCM 10045 / NBRC 100440)</name>
    <name type="common">Methanococcus jannaschii</name>
    <dbReference type="NCBI Taxonomy" id="243232"/>
    <lineage>
        <taxon>Archaea</taxon>
        <taxon>Methanobacteriati</taxon>
        <taxon>Methanobacteriota</taxon>
        <taxon>Methanomada group</taxon>
        <taxon>Methanococci</taxon>
        <taxon>Methanococcales</taxon>
        <taxon>Methanocaldococcaceae</taxon>
        <taxon>Methanocaldococcus</taxon>
    </lineage>
</organism>
<sequence>MEYIIKNGIVYDPLNGINGEKMDICVKDGKIVESVSDNAKVIDASGCVVMPGGIDSHSHVAGAKVNVGRIFRPEDSKREIYAKKGLRTGTGFSVPSTYKTGYQYSEMGYTTVIEAAMPPLIARHTHEEFMETPQIDKAAMPLFGNNWMVLEYLKEGDIKACAAFVAWLLKAVKGFAIKIVNPGGTEAWGWGKNVHSLDDPVPYFDITPREIVRGLAEVNELLGLPHSIHVHPNNLGHPGNWETTLETMKCVEGVEAKPRVGERETSYYNTHCQFHSYGGTSWKDFESKAIEIAEYVNKSKHVVIDVGQVTLDETTTMTADGPMEYDLHMTNGLKWANCDVELETGSGVVPFIYSPKGPVYAVQWAIGLELFLNTNTDKVLLTTDHPNAGPFTRYPRVIAWLMSKKYRDEWLYNKVHKWAQQRSHVADADKEYDLYEIAKITRANQAKVLGLSETKGHLGVGAEADIAIYAIDPEEKDGKKIEKAFRYAKYVLKGGEVVVKDGNVVKEVFGDTIYVDVQVGEDLMNEVLKDVGEKFRRYYSVNLENYPVSDEYANSWRVIKIDATDIN</sequence>
<feature type="chain" id="PRO_0000087391" description="Protein FwdA">
    <location>
        <begin position="1"/>
        <end position="567"/>
    </location>
</feature>
<protein>
    <recommendedName>
        <fullName>Protein FwdA</fullName>
    </recommendedName>
</protein>
<gene>
    <name type="primary">fwdA</name>
    <name type="ordered locus">MJ1169</name>
</gene>
<reference key="1">
    <citation type="journal article" date="1996" name="Science">
        <title>Complete genome sequence of the methanogenic archaeon, Methanococcus jannaschii.</title>
        <authorList>
            <person name="Bult C.J."/>
            <person name="White O."/>
            <person name="Olsen G.J."/>
            <person name="Zhou L."/>
            <person name="Fleischmann R.D."/>
            <person name="Sutton G.G."/>
            <person name="Blake J.A."/>
            <person name="FitzGerald L.M."/>
            <person name="Clayton R.A."/>
            <person name="Gocayne J.D."/>
            <person name="Kerlavage A.R."/>
            <person name="Dougherty B.A."/>
            <person name="Tomb J.-F."/>
            <person name="Adams M.D."/>
            <person name="Reich C.I."/>
            <person name="Overbeek R."/>
            <person name="Kirkness E.F."/>
            <person name="Weinstock K.G."/>
            <person name="Merrick J.M."/>
            <person name="Glodek A."/>
            <person name="Scott J.L."/>
            <person name="Geoghagen N.S.M."/>
            <person name="Weidman J.F."/>
            <person name="Fuhrmann J.L."/>
            <person name="Nguyen D."/>
            <person name="Utterback T.R."/>
            <person name="Kelley J.M."/>
            <person name="Peterson J.D."/>
            <person name="Sadow P.W."/>
            <person name="Hanna M.C."/>
            <person name="Cotton M.D."/>
            <person name="Roberts K.M."/>
            <person name="Hurst M.A."/>
            <person name="Kaine B.P."/>
            <person name="Borodovsky M."/>
            <person name="Klenk H.-P."/>
            <person name="Fraser C.M."/>
            <person name="Smith H.O."/>
            <person name="Woese C.R."/>
            <person name="Venter J.C."/>
        </authorList>
    </citation>
    <scope>NUCLEOTIDE SEQUENCE [LARGE SCALE GENOMIC DNA]</scope>
    <source>
        <strain>ATCC 43067 / DSM 2661 / JAL-1 / JCM 10045 / NBRC 100440</strain>
    </source>
</reference>
<comment type="similarity">
    <text evidence="1">Belongs to the metallo-dependent hydrolases superfamily. FwdA/FmdA family.</text>
</comment>
<dbReference type="EMBL" id="L77117">
    <property type="protein sequence ID" value="AAB99171.1"/>
    <property type="molecule type" value="Genomic_DNA"/>
</dbReference>
<dbReference type="PIR" id="H64445">
    <property type="entry name" value="H64445"/>
</dbReference>
<dbReference type="RefSeq" id="WP_010870682.1">
    <property type="nucleotide sequence ID" value="NC_000909.1"/>
</dbReference>
<dbReference type="SMR" id="Q58569"/>
<dbReference type="FunCoup" id="Q58569">
    <property type="interactions" value="91"/>
</dbReference>
<dbReference type="STRING" id="243232.MJ_1169"/>
<dbReference type="PaxDb" id="243232-MJ_1169"/>
<dbReference type="DNASU" id="1452067"/>
<dbReference type="EnsemblBacteria" id="AAB99171">
    <property type="protein sequence ID" value="AAB99171"/>
    <property type="gene ID" value="MJ_1169"/>
</dbReference>
<dbReference type="GeneID" id="1452067"/>
<dbReference type="KEGG" id="mja:MJ_1169"/>
<dbReference type="eggNOG" id="arCOG04461">
    <property type="taxonomic scope" value="Archaea"/>
</dbReference>
<dbReference type="HOGENOM" id="CLU_035587_0_0_2"/>
<dbReference type="InParanoid" id="Q58569"/>
<dbReference type="OrthoDB" id="8791at2157"/>
<dbReference type="PhylomeDB" id="Q58569"/>
<dbReference type="Proteomes" id="UP000000805">
    <property type="component" value="Chromosome"/>
</dbReference>
<dbReference type="GO" id="GO:0016810">
    <property type="term" value="F:hydrolase activity, acting on carbon-nitrogen (but not peptide) bonds"/>
    <property type="evidence" value="ECO:0007669"/>
    <property type="project" value="InterPro"/>
</dbReference>
<dbReference type="CDD" id="cd01304">
    <property type="entry name" value="FMDH_A"/>
    <property type="match status" value="1"/>
</dbReference>
<dbReference type="FunFam" id="2.30.40.10:FF:000064">
    <property type="entry name" value="Formylmethanofuran dehydrogenase subunit A"/>
    <property type="match status" value="1"/>
</dbReference>
<dbReference type="Gene3D" id="3.20.20.140">
    <property type="entry name" value="Metal-dependent hydrolases"/>
    <property type="match status" value="1"/>
</dbReference>
<dbReference type="Gene3D" id="2.30.40.10">
    <property type="entry name" value="Urease, subunit C, domain 1"/>
    <property type="match status" value="2"/>
</dbReference>
<dbReference type="InterPro" id="IPR013108">
    <property type="entry name" value="Amidohydro_3"/>
</dbReference>
<dbReference type="InterPro" id="IPR012027">
    <property type="entry name" value="Formylmethanofuran_DH_asu"/>
</dbReference>
<dbReference type="InterPro" id="IPR011059">
    <property type="entry name" value="Metal-dep_hydrolase_composite"/>
</dbReference>
<dbReference type="InterPro" id="IPR032466">
    <property type="entry name" value="Metal_Hydrolase"/>
</dbReference>
<dbReference type="InterPro" id="IPR050378">
    <property type="entry name" value="Metallo-dep_Hydrolases_sf"/>
</dbReference>
<dbReference type="InterPro" id="IPR053635">
    <property type="entry name" value="Metallo-hydrolase_FwdA/FmdA"/>
</dbReference>
<dbReference type="NCBIfam" id="NF042911">
    <property type="entry name" value="FMH_DH_FwdA"/>
    <property type="match status" value="1"/>
</dbReference>
<dbReference type="NCBIfam" id="TIGR03121">
    <property type="entry name" value="one_C_dehyd_A"/>
    <property type="match status" value="1"/>
</dbReference>
<dbReference type="PANTHER" id="PTHR11647:SF1">
    <property type="entry name" value="COLLAPSIN RESPONSE MEDIATOR PROTEIN"/>
    <property type="match status" value="1"/>
</dbReference>
<dbReference type="PANTHER" id="PTHR11647">
    <property type="entry name" value="HYDRANTOINASE/DIHYDROPYRIMIDINASE FAMILY MEMBER"/>
    <property type="match status" value="1"/>
</dbReference>
<dbReference type="Pfam" id="PF07969">
    <property type="entry name" value="Amidohydro_3"/>
    <property type="match status" value="1"/>
</dbReference>
<dbReference type="PIRSF" id="PIRSF006453">
    <property type="entry name" value="FwdA"/>
    <property type="match status" value="1"/>
</dbReference>
<dbReference type="SUPFAM" id="SSF51338">
    <property type="entry name" value="Composite domain of metallo-dependent hydrolases"/>
    <property type="match status" value="2"/>
</dbReference>
<dbReference type="SUPFAM" id="SSF51556">
    <property type="entry name" value="Metallo-dependent hydrolases"/>
    <property type="match status" value="1"/>
</dbReference>
<evidence type="ECO:0000305" key="1"/>
<accession>Q58569</accession>
<keyword id="KW-1185">Reference proteome</keyword>
<proteinExistence type="inferred from homology"/>
<name>FWDA_METJA</name>